<gene>
    <name evidence="1" type="primary">nuoH</name>
    <name type="ordered locus">BT9727_4978</name>
</gene>
<protein>
    <recommendedName>
        <fullName evidence="1">NADH-quinone oxidoreductase subunit H</fullName>
        <ecNumber evidence="1">7.1.1.-</ecNumber>
    </recommendedName>
    <alternativeName>
        <fullName evidence="1">NADH dehydrogenase I subunit H</fullName>
    </alternativeName>
    <alternativeName>
        <fullName evidence="1">NDH-1 subunit H</fullName>
    </alternativeName>
</protein>
<organism>
    <name type="scientific">Bacillus thuringiensis subsp. konkukian (strain 97-27)</name>
    <dbReference type="NCBI Taxonomy" id="281309"/>
    <lineage>
        <taxon>Bacteria</taxon>
        <taxon>Bacillati</taxon>
        <taxon>Bacillota</taxon>
        <taxon>Bacilli</taxon>
        <taxon>Bacillales</taxon>
        <taxon>Bacillaceae</taxon>
        <taxon>Bacillus</taxon>
        <taxon>Bacillus cereus group</taxon>
    </lineage>
</organism>
<name>NUOH_BACHK</name>
<comment type="function">
    <text evidence="1">NDH-1 shuttles electrons from NADH, via FMN and iron-sulfur (Fe-S) centers, to quinones in the respiratory chain. The immediate electron acceptor for the enzyme in this species is believed to be ubiquinone. Couples the redox reaction to proton translocation (for every two electrons transferred, four hydrogen ions are translocated across the cytoplasmic membrane), and thus conserves the redox energy in a proton gradient. This subunit may bind ubiquinone.</text>
</comment>
<comment type="catalytic activity">
    <reaction evidence="1">
        <text>a quinone + NADH + 5 H(+)(in) = a quinol + NAD(+) + 4 H(+)(out)</text>
        <dbReference type="Rhea" id="RHEA:57888"/>
        <dbReference type="ChEBI" id="CHEBI:15378"/>
        <dbReference type="ChEBI" id="CHEBI:24646"/>
        <dbReference type="ChEBI" id="CHEBI:57540"/>
        <dbReference type="ChEBI" id="CHEBI:57945"/>
        <dbReference type="ChEBI" id="CHEBI:132124"/>
    </reaction>
</comment>
<comment type="subunit">
    <text evidence="1">NDH-1 is composed of 14 different subunits. Subunits NuoA, H, J, K, L, M, N constitute the membrane sector of the complex.</text>
</comment>
<comment type="subcellular location">
    <subcellularLocation>
        <location evidence="1">Cell membrane</location>
        <topology evidence="1">Multi-pass membrane protein</topology>
    </subcellularLocation>
</comment>
<comment type="similarity">
    <text evidence="1">Belongs to the complex I subunit 1 family.</text>
</comment>
<reference key="1">
    <citation type="journal article" date="2006" name="J. Bacteriol.">
        <title>Pathogenomic sequence analysis of Bacillus cereus and Bacillus thuringiensis isolates closely related to Bacillus anthracis.</title>
        <authorList>
            <person name="Han C.S."/>
            <person name="Xie G."/>
            <person name="Challacombe J.F."/>
            <person name="Altherr M.R."/>
            <person name="Bhotika S.S."/>
            <person name="Bruce D."/>
            <person name="Campbell C.S."/>
            <person name="Campbell M.L."/>
            <person name="Chen J."/>
            <person name="Chertkov O."/>
            <person name="Cleland C."/>
            <person name="Dimitrijevic M."/>
            <person name="Doggett N.A."/>
            <person name="Fawcett J.J."/>
            <person name="Glavina T."/>
            <person name="Goodwin L.A."/>
            <person name="Hill K.K."/>
            <person name="Hitchcock P."/>
            <person name="Jackson P.J."/>
            <person name="Keim P."/>
            <person name="Kewalramani A.R."/>
            <person name="Longmire J."/>
            <person name="Lucas S."/>
            <person name="Malfatti S."/>
            <person name="McMurry K."/>
            <person name="Meincke L.J."/>
            <person name="Misra M."/>
            <person name="Moseman B.L."/>
            <person name="Mundt M."/>
            <person name="Munk A.C."/>
            <person name="Okinaka R.T."/>
            <person name="Parson-Quintana B."/>
            <person name="Reilly L.P."/>
            <person name="Richardson P."/>
            <person name="Robinson D.L."/>
            <person name="Rubin E."/>
            <person name="Saunders E."/>
            <person name="Tapia R."/>
            <person name="Tesmer J.G."/>
            <person name="Thayer N."/>
            <person name="Thompson L.S."/>
            <person name="Tice H."/>
            <person name="Ticknor L.O."/>
            <person name="Wills P.L."/>
            <person name="Brettin T.S."/>
            <person name="Gilna P."/>
        </authorList>
    </citation>
    <scope>NUCLEOTIDE SEQUENCE [LARGE SCALE GENOMIC DNA]</scope>
    <source>
        <strain>97-27</strain>
    </source>
</reference>
<dbReference type="EC" id="7.1.1.-" evidence="1"/>
<dbReference type="EMBL" id="AE017355">
    <property type="protein sequence ID" value="AAT63465.1"/>
    <property type="molecule type" value="Genomic_DNA"/>
</dbReference>
<dbReference type="RefSeq" id="WP_000573431.1">
    <property type="nucleotide sequence ID" value="NC_005957.1"/>
</dbReference>
<dbReference type="RefSeq" id="YP_039287.1">
    <property type="nucleotide sequence ID" value="NC_005957.1"/>
</dbReference>
<dbReference type="SMR" id="Q6HAY9"/>
<dbReference type="KEGG" id="btk:BT9727_4978"/>
<dbReference type="PATRIC" id="fig|281309.8.peg.5295"/>
<dbReference type="HOGENOM" id="CLU_015134_0_1_9"/>
<dbReference type="Proteomes" id="UP000001301">
    <property type="component" value="Chromosome"/>
</dbReference>
<dbReference type="GO" id="GO:0005886">
    <property type="term" value="C:plasma membrane"/>
    <property type="evidence" value="ECO:0007669"/>
    <property type="project" value="UniProtKB-SubCell"/>
</dbReference>
<dbReference type="GO" id="GO:0003954">
    <property type="term" value="F:NADH dehydrogenase activity"/>
    <property type="evidence" value="ECO:0007669"/>
    <property type="project" value="TreeGrafter"/>
</dbReference>
<dbReference type="GO" id="GO:0016655">
    <property type="term" value="F:oxidoreductase activity, acting on NAD(P)H, quinone or similar compound as acceptor"/>
    <property type="evidence" value="ECO:0007669"/>
    <property type="project" value="UniProtKB-UniRule"/>
</dbReference>
<dbReference type="GO" id="GO:0048038">
    <property type="term" value="F:quinone binding"/>
    <property type="evidence" value="ECO:0007669"/>
    <property type="project" value="UniProtKB-KW"/>
</dbReference>
<dbReference type="GO" id="GO:0009060">
    <property type="term" value="P:aerobic respiration"/>
    <property type="evidence" value="ECO:0007669"/>
    <property type="project" value="TreeGrafter"/>
</dbReference>
<dbReference type="HAMAP" id="MF_01350">
    <property type="entry name" value="NDH1_NuoH"/>
    <property type="match status" value="1"/>
</dbReference>
<dbReference type="InterPro" id="IPR001694">
    <property type="entry name" value="NADH_UbQ_OxRdtase_su1/FPO"/>
</dbReference>
<dbReference type="InterPro" id="IPR018086">
    <property type="entry name" value="NADH_UbQ_OxRdtase_su1_CS"/>
</dbReference>
<dbReference type="NCBIfam" id="NF004741">
    <property type="entry name" value="PRK06076.1-2"/>
    <property type="match status" value="1"/>
</dbReference>
<dbReference type="PANTHER" id="PTHR11432">
    <property type="entry name" value="NADH DEHYDROGENASE SUBUNIT 1"/>
    <property type="match status" value="1"/>
</dbReference>
<dbReference type="PANTHER" id="PTHR11432:SF3">
    <property type="entry name" value="NADH-UBIQUINONE OXIDOREDUCTASE CHAIN 1"/>
    <property type="match status" value="1"/>
</dbReference>
<dbReference type="Pfam" id="PF00146">
    <property type="entry name" value="NADHdh"/>
    <property type="match status" value="1"/>
</dbReference>
<dbReference type="PROSITE" id="PS00668">
    <property type="entry name" value="COMPLEX1_ND1_2"/>
    <property type="match status" value="1"/>
</dbReference>
<proteinExistence type="inferred from homology"/>
<evidence type="ECO:0000255" key="1">
    <source>
        <dbReference type="HAMAP-Rule" id="MF_01350"/>
    </source>
</evidence>
<feature type="chain" id="PRO_0000240058" description="NADH-quinone oxidoreductase subunit H">
    <location>
        <begin position="1"/>
        <end position="333"/>
    </location>
</feature>
<feature type="transmembrane region" description="Helical" evidence="1">
    <location>
        <begin position="15"/>
        <end position="35"/>
    </location>
</feature>
<feature type="transmembrane region" description="Helical" evidence="1">
    <location>
        <begin position="88"/>
        <end position="108"/>
    </location>
</feature>
<feature type="transmembrane region" description="Helical" evidence="1">
    <location>
        <begin position="117"/>
        <end position="137"/>
    </location>
</feature>
<feature type="transmembrane region" description="Helical" evidence="1">
    <location>
        <begin position="159"/>
        <end position="179"/>
    </location>
</feature>
<feature type="transmembrane region" description="Helical" evidence="1">
    <location>
        <begin position="191"/>
        <end position="211"/>
    </location>
</feature>
<feature type="transmembrane region" description="Helical" evidence="1">
    <location>
        <begin position="239"/>
        <end position="259"/>
    </location>
</feature>
<feature type="transmembrane region" description="Helical" evidence="1">
    <location>
        <begin position="274"/>
        <end position="296"/>
    </location>
</feature>
<feature type="transmembrane region" description="Helical" evidence="1">
    <location>
        <begin position="313"/>
        <end position="333"/>
    </location>
</feature>
<sequence length="333" mass="36881">MIETLLQSPSSWTNFFIFFGLAVLLLFAVLGFVTYGILAERKVMGFMQGRIGPNQVGGRFGLLQTVADVLKLLLKEDSIPKAADKPLFILAPVIAFAPAFMVLAVIPFTDKFQFADIGVGLLYYIAVSGITTIGVVTGGWASNNKYSLLGGMRAAAQMISYEIPLVMSVIGIVLLAGSLNLNEIVAAQENVWYIFVQPVGFVVFLIAAVAELNRTPFDLPEAESELVSGYHTEYSGFRWAFFMLSEYVYFFGMASLITVLFLGGWNPVMFLGFIPGAVWFALKFSSVVFLLIWFRVTFPRIRGDQLMEFGWKVLLPIALANIFLTALIKELFF</sequence>
<accession>Q6HAY9</accession>
<keyword id="KW-1003">Cell membrane</keyword>
<keyword id="KW-0472">Membrane</keyword>
<keyword id="KW-0520">NAD</keyword>
<keyword id="KW-0874">Quinone</keyword>
<keyword id="KW-1278">Translocase</keyword>
<keyword id="KW-0812">Transmembrane</keyword>
<keyword id="KW-1133">Transmembrane helix</keyword>
<keyword id="KW-0830">Ubiquinone</keyword>